<protein>
    <recommendedName>
        <fullName>2-oxoadipate dehydrogenase complex component E1</fullName>
        <shortName evidence="1">E1a</shortName>
        <shortName>OADC-E1</shortName>
        <shortName>OADH-E1</shortName>
        <ecNumber evidence="1">1.2.4.-</ecNumber>
    </recommendedName>
    <alternativeName>
        <fullName>2-oxoadipate dehydrogenase, mitochondrial</fullName>
    </alternativeName>
    <alternativeName>
        <fullName>Alpha-ketoadipate dehydrogenase</fullName>
        <shortName>Alpha-KADH-E1</shortName>
    </alternativeName>
    <alternativeName>
        <fullName>Dehydrogenase E1 and transketolase domain-containing protein 1</fullName>
    </alternativeName>
    <alternativeName>
        <fullName>Probable 2-oxoglutarate dehydrogenase E1 component DHKTD1, mitochondrial</fullName>
    </alternativeName>
</protein>
<feature type="transit peptide" description="Mitochondrion" evidence="2">
    <location>
        <begin position="1"/>
        <end status="unknown"/>
    </location>
</feature>
<feature type="chain" id="PRO_0000307941" description="2-oxoadipate dehydrogenase complex component E1">
    <location>
        <begin status="unknown"/>
        <end position="927"/>
    </location>
</feature>
<name>DHTK1_XENLA</name>
<keyword id="KW-0324">Glycolysis</keyword>
<keyword id="KW-0496">Mitochondrion</keyword>
<keyword id="KW-0560">Oxidoreductase</keyword>
<keyword id="KW-1185">Reference proteome</keyword>
<keyword id="KW-0786">Thiamine pyrophosphate</keyword>
<keyword id="KW-0809">Transit peptide</keyword>
<sequence>MNVFAHRCSSCRRAVVLWRPGLHRLYRTERGVYGYRPKISAGSQLQESSTRGKQAASPTVDHGLARLVTAYREHGHKAAKINPLFTGQAVMDMVPEIQEIMEILHGPFSTTGLLNMGKSEATIEEVLAYLDHTYCGQISIETSQLQNYKEREWFSRRFEELKQESFSTEERKHLARLMLECQEFDHFLATKFSTVKRYGGEGAESMMGFFHEMLKMCSFGGVTDVIIGMPHRGRLNLLTGLLQFPPELMFRKMRGLSEFPENSPSIGDVLSHLTSSVDLDFGSHRPLHVTMLPNPSHLEAINPVAVGKTRARQQSLSDGDYSTESSAQPGDKVVCLQVHGDASISGQGIVTETFTLSNLPHYRIGGSIHLIVNNQLGYTTPAERGRSSLYSSDVGKIVGCAVIHVNGDDPEEVLRATRLAVEYQRCFRKDVIIDLLCYRQWGHNELDEPFFTNPSMYKIIRSRKSIPDVYSERLIAEGLMTEEEATEIRTTYYSKFNDHLSNMTLYSPPSTNLQAHWREMIEPSARTTTWDTGLPADLLKFIGAKSVEVPEEFKMHSHLLKMHAQSRVQKLQEATKLDWATAEALAFGSLLCQGFNIRISGQDVGRGTFSQRHAMLVCQETNDTYIPLNHMTPDQKGFLEVSNSALSEEAVLGFEYGMSIESPKLLPIWEAQFGDFFNGAQIIFDTFISGGEAKWLLQSGIVILLPHGYDGAGPEHSSCRIERFLQMCDSTEEGVDGDTVNMFVVHPTTPAQYFHLLRRQMVRSFRKPLIVASPKMLLRYPAAVSSLEDIAPGKTFRSVIGDSSADPKSVSKVILCSGKHYYALHKQREALGEQGRSSAIIRVEELCPFPLEALQQEIHRYPKAKDFIWSQEEPQNMGAWTFVAPRFEKQLACKLRLVSRPALPAPAVGIGTLHQQQQEEITVKTLS</sequence>
<proteinExistence type="evidence at transcript level"/>
<evidence type="ECO:0000250" key="1">
    <source>
        <dbReference type="UniProtKB" id="Q96HY7"/>
    </source>
</evidence>
<evidence type="ECO:0000255" key="2"/>
<accession>Q6P286</accession>
<dbReference type="EC" id="1.2.4.-" evidence="1"/>
<dbReference type="EMBL" id="BC064683">
    <property type="protein sequence ID" value="AAH64683.1"/>
    <property type="molecule type" value="mRNA"/>
</dbReference>
<dbReference type="RefSeq" id="NP_001084395.1">
    <property type="nucleotide sequence ID" value="NM_001090926.1"/>
</dbReference>
<dbReference type="SMR" id="Q6P286"/>
<dbReference type="DNASU" id="403360"/>
<dbReference type="GeneID" id="403360"/>
<dbReference type="KEGG" id="xla:403360"/>
<dbReference type="AGR" id="Xenbase:XB-GENE-980614"/>
<dbReference type="CTD" id="403360"/>
<dbReference type="Xenbase" id="XB-GENE-980614">
    <property type="gene designation" value="dhtkd1.L"/>
</dbReference>
<dbReference type="OMA" id="PAQYYHV"/>
<dbReference type="OrthoDB" id="413077at2759"/>
<dbReference type="Proteomes" id="UP000186698">
    <property type="component" value="Chromosome 3L"/>
</dbReference>
<dbReference type="Bgee" id="403360">
    <property type="expression patterns" value="Expressed in blastula and 19 other cell types or tissues"/>
</dbReference>
<dbReference type="GO" id="GO:0005739">
    <property type="term" value="C:mitochondrion"/>
    <property type="evidence" value="ECO:0007669"/>
    <property type="project" value="UniProtKB-SubCell"/>
</dbReference>
<dbReference type="GO" id="GO:0160166">
    <property type="term" value="F:2-oxoadipate dehydrogenase activity"/>
    <property type="evidence" value="ECO:0007669"/>
    <property type="project" value="RHEA"/>
</dbReference>
<dbReference type="GO" id="GO:0004591">
    <property type="term" value="F:oxoglutarate dehydrogenase (succinyl-transferring) activity"/>
    <property type="evidence" value="ECO:0007669"/>
    <property type="project" value="UniProtKB-EC"/>
</dbReference>
<dbReference type="GO" id="GO:0030976">
    <property type="term" value="F:thiamine pyrophosphate binding"/>
    <property type="evidence" value="ECO:0007669"/>
    <property type="project" value="InterPro"/>
</dbReference>
<dbReference type="GO" id="GO:0006096">
    <property type="term" value="P:glycolytic process"/>
    <property type="evidence" value="ECO:0007669"/>
    <property type="project" value="UniProtKB-KW"/>
</dbReference>
<dbReference type="CDD" id="cd02016">
    <property type="entry name" value="TPP_E1_OGDC_like"/>
    <property type="match status" value="1"/>
</dbReference>
<dbReference type="FunFam" id="3.40.50.970:FF:000034">
    <property type="entry name" value="Probable 2-oxoglutarate dehydrogenase E1 component DHKTD1, mitochondrial"/>
    <property type="match status" value="1"/>
</dbReference>
<dbReference type="FunFam" id="1.10.287.1150:FF:000005">
    <property type="entry name" value="probable 2-oxoglutarate dehydrogenase E1 component DHKTD1, mitochondrial"/>
    <property type="match status" value="1"/>
</dbReference>
<dbReference type="Gene3D" id="3.40.50.12470">
    <property type="match status" value="1"/>
</dbReference>
<dbReference type="Gene3D" id="3.40.50.970">
    <property type="match status" value="1"/>
</dbReference>
<dbReference type="Gene3D" id="3.40.50.11610">
    <property type="entry name" value="Multifunctional 2-oxoglutarate metabolism enzyme, C-terminal domain"/>
    <property type="match status" value="1"/>
</dbReference>
<dbReference type="Gene3D" id="1.10.287.1150">
    <property type="entry name" value="TPP helical domain"/>
    <property type="match status" value="1"/>
</dbReference>
<dbReference type="InterPro" id="IPR011603">
    <property type="entry name" value="2oxoglutarate_DH_E1"/>
</dbReference>
<dbReference type="InterPro" id="IPR001017">
    <property type="entry name" value="DH_E1"/>
</dbReference>
<dbReference type="InterPro" id="IPR042179">
    <property type="entry name" value="KGD_C_sf"/>
</dbReference>
<dbReference type="InterPro" id="IPR031717">
    <property type="entry name" value="ODO-1/KGD_C"/>
</dbReference>
<dbReference type="InterPro" id="IPR029061">
    <property type="entry name" value="THDP-binding"/>
</dbReference>
<dbReference type="InterPro" id="IPR005475">
    <property type="entry name" value="Transketolase-like_Pyr-bd"/>
</dbReference>
<dbReference type="NCBIfam" id="TIGR00239">
    <property type="entry name" value="2oxo_dh_E1"/>
    <property type="match status" value="1"/>
</dbReference>
<dbReference type="NCBIfam" id="NF006914">
    <property type="entry name" value="PRK09404.1"/>
    <property type="match status" value="1"/>
</dbReference>
<dbReference type="NCBIfam" id="NF008907">
    <property type="entry name" value="PRK12270.1"/>
    <property type="match status" value="1"/>
</dbReference>
<dbReference type="PANTHER" id="PTHR23152:SF4">
    <property type="entry name" value="2-OXOADIPATE DEHYDROGENASE COMPLEX COMPONENT E1"/>
    <property type="match status" value="1"/>
</dbReference>
<dbReference type="PANTHER" id="PTHR23152">
    <property type="entry name" value="2-OXOGLUTARATE DEHYDROGENASE"/>
    <property type="match status" value="1"/>
</dbReference>
<dbReference type="Pfam" id="PF00676">
    <property type="entry name" value="E1_dh"/>
    <property type="match status" value="1"/>
</dbReference>
<dbReference type="Pfam" id="PF16870">
    <property type="entry name" value="OxoGdeHyase_C"/>
    <property type="match status" value="1"/>
</dbReference>
<dbReference type="Pfam" id="PF02779">
    <property type="entry name" value="Transket_pyr"/>
    <property type="match status" value="1"/>
</dbReference>
<dbReference type="PIRSF" id="PIRSF000157">
    <property type="entry name" value="Oxoglu_dh_E1"/>
    <property type="match status" value="1"/>
</dbReference>
<dbReference type="SMART" id="SM00861">
    <property type="entry name" value="Transket_pyr"/>
    <property type="match status" value="1"/>
</dbReference>
<dbReference type="SUPFAM" id="SSF52518">
    <property type="entry name" value="Thiamin diphosphate-binding fold (THDP-binding)"/>
    <property type="match status" value="2"/>
</dbReference>
<gene>
    <name type="primary">dhtkd1</name>
</gene>
<comment type="function">
    <text evidence="1">2-oxoadipate dehydrogenase (E1a) component of the 2-oxoadipate dehydrogenase complex (OADHC). Participates in the first step, rate limiting for the overall conversion of 2-oxoadipate (alpha-ketoadipate) to glutaryl-CoA and CO(2) catalyzed by the whole OADHC. Catalyzes the irreversible decarboxylation of 2-oxoadipate via the thiamine diphosphate (ThDP) cofactor and subsequent transfer of the decarboxylated acyl intermediate on an oxidized dihydrolipoyl group that is covalently amidated to the E2 enzyme (dihydrolipoyllysine-residue succinyltransferase or DLST). Can catalyze the decarboxylation of 2-oxoglutarate in vitro, but at a much lower rate than 2-oxoadipate. Responsible for the last step of L-lysine, L-hydroxylysine and L-tryptophan catabolism with the common product being 2-oxoadipate.</text>
</comment>
<comment type="catalytic activity">
    <reaction evidence="1">
        <text>N(6)-[(R)-lipoyl]-L-lysyl-[protein] + 2-oxoadipate + H(+) = N(6)-[(R)-S(8)-glutaryldihydrolipoyl]-L-lysyl-[protein] + CO2</text>
        <dbReference type="Rhea" id="RHEA:69576"/>
        <dbReference type="Rhea" id="RHEA-COMP:10474"/>
        <dbReference type="Rhea" id="RHEA-COMP:20093"/>
        <dbReference type="ChEBI" id="CHEBI:15378"/>
        <dbReference type="ChEBI" id="CHEBI:16526"/>
        <dbReference type="ChEBI" id="CHEBI:57499"/>
        <dbReference type="ChEBI" id="CHEBI:83099"/>
        <dbReference type="ChEBI" id="CHEBI:184385"/>
    </reaction>
    <physiologicalReaction direction="left-to-right" evidence="1">
        <dbReference type="Rhea" id="RHEA:69577"/>
    </physiologicalReaction>
</comment>
<comment type="cofactor">
    <cofactor evidence="1">
        <name>thiamine diphosphate</name>
        <dbReference type="ChEBI" id="CHEBI:58937"/>
    </cofactor>
</comment>
<comment type="pathway">
    <text evidence="1">Amino-acid degradation.</text>
</comment>
<comment type="subunit">
    <text evidence="1">The 2-oxoadipate dehydrogenase complex is composed of OADH (2-oxoadipate dehydrogenase; E1a), DLST (dihydrolipoamide succinyltransferase; E2) and DLD (dihydrolipoamide dehydrogenase; E3). E1a functional unit is a dimer.</text>
</comment>
<comment type="subcellular location">
    <subcellularLocation>
        <location evidence="1">Mitochondrion</location>
    </subcellularLocation>
</comment>
<comment type="miscellaneous">
    <text evidence="1">The mitochondrial 2-oxoglutarate and 2-oxoadipate dehydrogenase complexes (OGDHC and OADHC, respectively) share their E2 (DLST) and E3 (dihydrolipoyl dehydrogenase or DLD) components, but the E1 component is specific to each complex (E1o and E1a, respectively).</text>
</comment>
<comment type="similarity">
    <text evidence="1">Belongs to the alpha-ketoglutarate dehydrogenase family.</text>
</comment>
<organism>
    <name type="scientific">Xenopus laevis</name>
    <name type="common">African clawed frog</name>
    <dbReference type="NCBI Taxonomy" id="8355"/>
    <lineage>
        <taxon>Eukaryota</taxon>
        <taxon>Metazoa</taxon>
        <taxon>Chordata</taxon>
        <taxon>Craniata</taxon>
        <taxon>Vertebrata</taxon>
        <taxon>Euteleostomi</taxon>
        <taxon>Amphibia</taxon>
        <taxon>Batrachia</taxon>
        <taxon>Anura</taxon>
        <taxon>Pipoidea</taxon>
        <taxon>Pipidae</taxon>
        <taxon>Xenopodinae</taxon>
        <taxon>Xenopus</taxon>
        <taxon>Xenopus</taxon>
    </lineage>
</organism>
<reference key="1">
    <citation type="submission" date="2003-12" db="EMBL/GenBank/DDBJ databases">
        <authorList>
            <consortium name="NIH - Xenopus Gene Collection (XGC) project"/>
        </authorList>
    </citation>
    <scope>NUCLEOTIDE SEQUENCE [LARGE SCALE MRNA]</scope>
    <source>
        <tissue>Embryo</tissue>
    </source>
</reference>